<organism>
    <name type="scientific">Methanocaldococcus jannaschii (strain ATCC 43067 / DSM 2661 / JAL-1 / JCM 10045 / NBRC 100440)</name>
    <name type="common">Methanococcus jannaschii</name>
    <dbReference type="NCBI Taxonomy" id="243232"/>
    <lineage>
        <taxon>Archaea</taxon>
        <taxon>Methanobacteriati</taxon>
        <taxon>Methanobacteriota</taxon>
        <taxon>Methanomada group</taxon>
        <taxon>Methanococci</taxon>
        <taxon>Methanococcales</taxon>
        <taxon>Methanocaldococcaceae</taxon>
        <taxon>Methanocaldococcus</taxon>
    </lineage>
</organism>
<protein>
    <recommendedName>
        <fullName>Uncharacterized cation transporter MJ1485</fullName>
    </recommendedName>
</protein>
<evidence type="ECO:0000255" key="1"/>
<evidence type="ECO:0000305" key="2"/>
<proteinExistence type="inferred from homology"/>
<accession>Q58880</accession>
<keyword id="KW-1003">Cell membrane</keyword>
<keyword id="KW-0406">Ion transport</keyword>
<keyword id="KW-0472">Membrane</keyword>
<keyword id="KW-1185">Reference proteome</keyword>
<keyword id="KW-0812">Transmembrane</keyword>
<keyword id="KW-1133">Transmembrane helix</keyword>
<keyword id="KW-0813">Transport</keyword>
<name>Y1485_METJA</name>
<dbReference type="EMBL" id="L77117">
    <property type="protein sequence ID" value="AAB99495.1"/>
    <property type="molecule type" value="Genomic_DNA"/>
</dbReference>
<dbReference type="PIR" id="D64485">
    <property type="entry name" value="D64485"/>
</dbReference>
<dbReference type="RefSeq" id="WP_010871007.1">
    <property type="nucleotide sequence ID" value="NC_000909.1"/>
</dbReference>
<dbReference type="SMR" id="Q58880"/>
<dbReference type="FunCoup" id="Q58880">
    <property type="interactions" value="2"/>
</dbReference>
<dbReference type="STRING" id="243232.MJ_1485"/>
<dbReference type="PaxDb" id="243232-MJ_1485"/>
<dbReference type="EnsemblBacteria" id="AAB99495">
    <property type="protein sequence ID" value="AAB99495"/>
    <property type="gene ID" value="MJ_1485"/>
</dbReference>
<dbReference type="GeneID" id="1452391"/>
<dbReference type="KEGG" id="mja:MJ_1485"/>
<dbReference type="eggNOG" id="arCOG04145">
    <property type="taxonomic scope" value="Archaea"/>
</dbReference>
<dbReference type="HOGENOM" id="CLU_030708_3_0_2"/>
<dbReference type="InParanoid" id="Q58880"/>
<dbReference type="OrthoDB" id="111943at2157"/>
<dbReference type="PhylomeDB" id="Q58880"/>
<dbReference type="Proteomes" id="UP000000805">
    <property type="component" value="Chromosome"/>
</dbReference>
<dbReference type="GO" id="GO:0005886">
    <property type="term" value="C:plasma membrane"/>
    <property type="evidence" value="ECO:0000318"/>
    <property type="project" value="GO_Central"/>
</dbReference>
<dbReference type="GO" id="GO:0015079">
    <property type="term" value="F:potassium ion transmembrane transporter activity"/>
    <property type="evidence" value="ECO:0000318"/>
    <property type="project" value="GO_Central"/>
</dbReference>
<dbReference type="GO" id="GO:0071805">
    <property type="term" value="P:potassium ion transmembrane transport"/>
    <property type="evidence" value="ECO:0000318"/>
    <property type="project" value="GO_Central"/>
</dbReference>
<dbReference type="InterPro" id="IPR003445">
    <property type="entry name" value="Cat_transpt"/>
</dbReference>
<dbReference type="PANTHER" id="PTHR32024">
    <property type="entry name" value="TRK SYSTEM POTASSIUM UPTAKE PROTEIN TRKG-RELATED"/>
    <property type="match status" value="1"/>
</dbReference>
<dbReference type="PANTHER" id="PTHR32024:SF2">
    <property type="entry name" value="TRK SYSTEM POTASSIUM UPTAKE PROTEIN TRKG-RELATED"/>
    <property type="match status" value="1"/>
</dbReference>
<dbReference type="Pfam" id="PF02386">
    <property type="entry name" value="TrkH"/>
    <property type="match status" value="2"/>
</dbReference>
<sequence length="474" mass="52537">MGICRLTKKDIEGILHILGGIIQIIGIFTLVPCIVSVYYNENTFLNFLIPGLFFSIFGFVLKRATKPKNLKLHHTMVASALAWLIASFIGAIPLYLSIDYFSYVDAVYESMSAWTTTGMTLIPNVEVLPKSILFWRSFQQWIGGVGILVLSALVLARSGTVAYLLYTSEARQERIMPSAIGTIKTIIWIYILYTILGVLLLYLSGLSFWDALNLTMTGISTGGMSISNYSFPYNDFAKIVMIGIMMVGGVMSFSIHHKLLTGKYFNDIQTKYALIVTAFISIIISIKDKVPIIDSLFTVVSAMTSTGFTTINVGNLSSLSLFLIIFLMLIGGGAGTTTGGVKIIRFLVILKALLYEIKEIIYPKSAVIHEHLDDMDLNYRIIREAFVVFFLYCLSSFLTALIFIALGYNPYDSIFDAVSFTSNIGISLGVVTLKTPVIGKIAGIIAMWIGRLEIIPVLVLFATLYFKTLRLLKK</sequence>
<reference key="1">
    <citation type="journal article" date="1996" name="Science">
        <title>Complete genome sequence of the methanogenic archaeon, Methanococcus jannaschii.</title>
        <authorList>
            <person name="Bult C.J."/>
            <person name="White O."/>
            <person name="Olsen G.J."/>
            <person name="Zhou L."/>
            <person name="Fleischmann R.D."/>
            <person name="Sutton G.G."/>
            <person name="Blake J.A."/>
            <person name="FitzGerald L.M."/>
            <person name="Clayton R.A."/>
            <person name="Gocayne J.D."/>
            <person name="Kerlavage A.R."/>
            <person name="Dougherty B.A."/>
            <person name="Tomb J.-F."/>
            <person name="Adams M.D."/>
            <person name="Reich C.I."/>
            <person name="Overbeek R."/>
            <person name="Kirkness E.F."/>
            <person name="Weinstock K.G."/>
            <person name="Merrick J.M."/>
            <person name="Glodek A."/>
            <person name="Scott J.L."/>
            <person name="Geoghagen N.S.M."/>
            <person name="Weidman J.F."/>
            <person name="Fuhrmann J.L."/>
            <person name="Nguyen D."/>
            <person name="Utterback T.R."/>
            <person name="Kelley J.M."/>
            <person name="Peterson J.D."/>
            <person name="Sadow P.W."/>
            <person name="Hanna M.C."/>
            <person name="Cotton M.D."/>
            <person name="Roberts K.M."/>
            <person name="Hurst M.A."/>
            <person name="Kaine B.P."/>
            <person name="Borodovsky M."/>
            <person name="Klenk H.-P."/>
            <person name="Fraser C.M."/>
            <person name="Smith H.O."/>
            <person name="Woese C.R."/>
            <person name="Venter J.C."/>
        </authorList>
    </citation>
    <scope>NUCLEOTIDE SEQUENCE [LARGE SCALE GENOMIC DNA]</scope>
    <source>
        <strain>ATCC 43067 / DSM 2661 / JAL-1 / JCM 10045 / NBRC 100440</strain>
    </source>
</reference>
<comment type="subcellular location">
    <subcellularLocation>
        <location evidence="2">Cell membrane</location>
        <topology evidence="2">Multi-pass membrane protein</topology>
    </subcellularLocation>
</comment>
<comment type="similarity">
    <text evidence="2">Belongs to the TrkH potassium transport family.</text>
</comment>
<gene>
    <name type="ordered locus">MJ1485</name>
</gene>
<feature type="chain" id="PRO_0000070483" description="Uncharacterized cation transporter MJ1485">
    <location>
        <begin position="1"/>
        <end position="474"/>
    </location>
</feature>
<feature type="transmembrane region" description="Helical" evidence="1">
    <location>
        <begin position="17"/>
        <end position="39"/>
    </location>
</feature>
<feature type="transmembrane region" description="Helical" evidence="1">
    <location>
        <begin position="44"/>
        <end position="61"/>
    </location>
</feature>
<feature type="transmembrane region" description="Helical" evidence="1">
    <location>
        <begin position="81"/>
        <end position="103"/>
    </location>
</feature>
<feature type="transmembrane region" description="Helical" evidence="1">
    <location>
        <begin position="144"/>
        <end position="166"/>
    </location>
</feature>
<feature type="transmembrane region" description="Helical" evidence="1">
    <location>
        <begin position="186"/>
        <end position="208"/>
    </location>
</feature>
<feature type="transmembrane region" description="Helical" evidence="1">
    <location>
        <begin position="239"/>
        <end position="256"/>
    </location>
</feature>
<feature type="transmembrane region" description="Helical" evidence="1">
    <location>
        <begin position="268"/>
        <end position="286"/>
    </location>
</feature>
<feature type="transmembrane region" description="Helical" evidence="1">
    <location>
        <begin position="319"/>
        <end position="341"/>
    </location>
</feature>
<feature type="transmembrane region" description="Helical" evidence="1">
    <location>
        <begin position="385"/>
        <end position="407"/>
    </location>
</feature>
<feature type="transmembrane region" description="Helical" evidence="1">
    <location>
        <begin position="444"/>
        <end position="466"/>
    </location>
</feature>